<evidence type="ECO:0000250" key="1"/>
<evidence type="ECO:0000255" key="2"/>
<evidence type="ECO:0000255" key="3">
    <source>
        <dbReference type="PROSITE-ProRule" id="PRU00107"/>
    </source>
</evidence>
<evidence type="ECO:0000269" key="4">
    <source>
    </source>
</evidence>
<evidence type="ECO:0000305" key="5"/>
<name>PDK4_ICTTR</name>
<feature type="transit peptide" description="Mitochondrion" evidence="2">
    <location>
        <begin position="1"/>
        <end status="unknown"/>
    </location>
</feature>
<feature type="chain" id="PRO_0000023448" description="[Pyruvate dehydrogenase (acetyl-transferring)] kinase isozyme 4, mitochondrial">
    <location>
        <begin status="unknown"/>
        <end position="412"/>
    </location>
</feature>
<feature type="domain" description="Histidine kinase" evidence="3">
    <location>
        <begin position="138"/>
        <end position="368"/>
    </location>
</feature>
<feature type="binding site" evidence="1">
    <location>
        <begin position="254"/>
        <end position="261"/>
    </location>
    <ligand>
        <name>ATP</name>
        <dbReference type="ChEBI" id="CHEBI:30616"/>
    </ligand>
</feature>
<feature type="binding site" evidence="1">
    <location>
        <position position="293"/>
    </location>
    <ligand>
        <name>ATP</name>
        <dbReference type="ChEBI" id="CHEBI:30616"/>
    </ligand>
</feature>
<feature type="binding site" evidence="1">
    <location>
        <begin position="312"/>
        <end position="313"/>
    </location>
    <ligand>
        <name>ATP</name>
        <dbReference type="ChEBI" id="CHEBI:30616"/>
    </ligand>
</feature>
<feature type="binding site" evidence="1">
    <location>
        <begin position="329"/>
        <end position="334"/>
    </location>
    <ligand>
        <name>ATP</name>
        <dbReference type="ChEBI" id="CHEBI:30616"/>
    </ligand>
</feature>
<feature type="site" description="Interaction with the other subunit in the homodimer" evidence="1">
    <location>
        <position position="157"/>
    </location>
</feature>
<feature type="site" description="Interaction with the other subunit in the homodimer" evidence="1">
    <location>
        <position position="161"/>
    </location>
</feature>
<feature type="site" description="Interaction with the other subunit in the homodimer" evidence="1">
    <location>
        <position position="395"/>
    </location>
</feature>
<gene>
    <name type="primary">PDK4</name>
</gene>
<protein>
    <recommendedName>
        <fullName>[Pyruvate dehydrogenase (acetyl-transferring)] kinase isozyme 4, mitochondrial</fullName>
        <ecNumber>2.7.11.2</ecNumber>
    </recommendedName>
    <alternativeName>
        <fullName>Pyruvate dehydrogenase kinase isoform 4</fullName>
    </alternativeName>
</protein>
<accession>O88345</accession>
<reference key="1">
    <citation type="journal article" date="1998" name="Proc. Natl. Acad. Sci. U.S.A.">
        <title>Low-temperature carbon utilization is regulated by novel gene activity in the heart of a hibernating mammal.</title>
        <authorList>
            <person name="Andrews M.T."/>
            <person name="Squire T.L."/>
            <person name="Bowen C.M."/>
            <person name="Rollins M.B."/>
        </authorList>
    </citation>
    <scope>NUCLEOTIDE SEQUENCE [MRNA]</scope>
    <scope>TISSUE SPECIFICITY</scope>
    <scope>INDUCTION</scope>
    <source>
        <tissue>Heart</tissue>
    </source>
</reference>
<organism>
    <name type="scientific">Ictidomys tridecemlineatus</name>
    <name type="common">Thirteen-lined ground squirrel</name>
    <name type="synonym">Spermophilus tridecemlineatus</name>
    <dbReference type="NCBI Taxonomy" id="43179"/>
    <lineage>
        <taxon>Eukaryota</taxon>
        <taxon>Metazoa</taxon>
        <taxon>Chordata</taxon>
        <taxon>Craniata</taxon>
        <taxon>Vertebrata</taxon>
        <taxon>Euteleostomi</taxon>
        <taxon>Mammalia</taxon>
        <taxon>Eutheria</taxon>
        <taxon>Euarchontoglires</taxon>
        <taxon>Glires</taxon>
        <taxon>Rodentia</taxon>
        <taxon>Sciuromorpha</taxon>
        <taxon>Sciuridae</taxon>
        <taxon>Xerinae</taxon>
        <taxon>Marmotini</taxon>
        <taxon>Ictidomys</taxon>
    </lineage>
</organism>
<dbReference type="EC" id="2.7.11.2"/>
<dbReference type="EMBL" id="AF020845">
    <property type="protein sequence ID" value="AAC40161.1"/>
    <property type="molecule type" value="mRNA"/>
</dbReference>
<dbReference type="RefSeq" id="NP_001269196.1">
    <property type="nucleotide sequence ID" value="NM_001282267.1"/>
</dbReference>
<dbReference type="SMR" id="O88345"/>
<dbReference type="FunCoup" id="O88345">
    <property type="interactions" value="1335"/>
</dbReference>
<dbReference type="STRING" id="43179.ENSSTOP00000019435"/>
<dbReference type="GeneID" id="101976272"/>
<dbReference type="KEGG" id="iti:101976272"/>
<dbReference type="CTD" id="5166"/>
<dbReference type="eggNOG" id="KOG0787">
    <property type="taxonomic scope" value="Eukaryota"/>
</dbReference>
<dbReference type="InParanoid" id="O88345"/>
<dbReference type="OrthoDB" id="241648at2759"/>
<dbReference type="Proteomes" id="UP000005215">
    <property type="component" value="Unassembled WGS sequence"/>
</dbReference>
<dbReference type="GO" id="GO:0005759">
    <property type="term" value="C:mitochondrial matrix"/>
    <property type="evidence" value="ECO:0007669"/>
    <property type="project" value="UniProtKB-SubCell"/>
</dbReference>
<dbReference type="GO" id="GO:0005524">
    <property type="term" value="F:ATP binding"/>
    <property type="evidence" value="ECO:0007669"/>
    <property type="project" value="UniProtKB-KW"/>
</dbReference>
<dbReference type="GO" id="GO:0004740">
    <property type="term" value="F:pyruvate dehydrogenase (acetyl-transferring) kinase activity"/>
    <property type="evidence" value="ECO:0000250"/>
    <property type="project" value="UniProtKB"/>
</dbReference>
<dbReference type="GO" id="GO:0071398">
    <property type="term" value="P:cellular response to fatty acid"/>
    <property type="evidence" value="ECO:0000250"/>
    <property type="project" value="UniProtKB"/>
</dbReference>
<dbReference type="GO" id="GO:0009267">
    <property type="term" value="P:cellular response to starvation"/>
    <property type="evidence" value="ECO:0000250"/>
    <property type="project" value="UniProtKB"/>
</dbReference>
<dbReference type="GO" id="GO:0042750">
    <property type="term" value="P:hibernation"/>
    <property type="evidence" value="ECO:0007669"/>
    <property type="project" value="UniProtKB-KW"/>
</dbReference>
<dbReference type="GO" id="GO:0008286">
    <property type="term" value="P:insulin receptor signaling pathway"/>
    <property type="evidence" value="ECO:0000250"/>
    <property type="project" value="UniProtKB"/>
</dbReference>
<dbReference type="GO" id="GO:0072593">
    <property type="term" value="P:reactive oxygen species metabolic process"/>
    <property type="evidence" value="ECO:0000250"/>
    <property type="project" value="UniProtKB"/>
</dbReference>
<dbReference type="GO" id="GO:0010510">
    <property type="term" value="P:regulation of acetyl-CoA biosynthetic process from pyruvate"/>
    <property type="evidence" value="ECO:0000250"/>
    <property type="project" value="UniProtKB"/>
</dbReference>
<dbReference type="GO" id="GO:0042304">
    <property type="term" value="P:regulation of fatty acid biosynthetic process"/>
    <property type="evidence" value="ECO:0000250"/>
    <property type="project" value="UniProtKB"/>
</dbReference>
<dbReference type="GO" id="GO:0010906">
    <property type="term" value="P:regulation of glucose metabolic process"/>
    <property type="evidence" value="ECO:0000250"/>
    <property type="project" value="UniProtKB"/>
</dbReference>
<dbReference type="CDD" id="cd16929">
    <property type="entry name" value="HATPase_PDK-like"/>
    <property type="match status" value="1"/>
</dbReference>
<dbReference type="FunFam" id="1.20.140.20:FF:000001">
    <property type="entry name" value="[Pyruvate dehydrogenase (acetyl-transferring)] kinase isozyme 2, mitochondrial"/>
    <property type="match status" value="1"/>
</dbReference>
<dbReference type="FunFam" id="3.30.565.10:FF:000007">
    <property type="entry name" value="Mitochondrial pyruvate dehydrogenase kinase isoform 2"/>
    <property type="match status" value="1"/>
</dbReference>
<dbReference type="Gene3D" id="1.20.140.20">
    <property type="entry name" value="Alpha-ketoacid/pyruvate dehydrogenase kinase, N-terminal domain"/>
    <property type="match status" value="1"/>
</dbReference>
<dbReference type="Gene3D" id="3.30.565.10">
    <property type="entry name" value="Histidine kinase-like ATPase, C-terminal domain"/>
    <property type="match status" value="1"/>
</dbReference>
<dbReference type="InterPro" id="IPR036784">
    <property type="entry name" value="AK/P_DHK_N_sf"/>
</dbReference>
<dbReference type="InterPro" id="IPR018955">
    <property type="entry name" value="BCDHK/PDK_N"/>
</dbReference>
<dbReference type="InterPro" id="IPR039028">
    <property type="entry name" value="BCKD/PDK"/>
</dbReference>
<dbReference type="InterPro" id="IPR036890">
    <property type="entry name" value="HATPase_C_sf"/>
</dbReference>
<dbReference type="InterPro" id="IPR005467">
    <property type="entry name" value="His_kinase_dom"/>
</dbReference>
<dbReference type="PANTHER" id="PTHR11947:SF22">
    <property type="entry name" value="[PYRUVATE DEHYDROGENASE (ACETYL-TRANSFERRING)] KINASE ISOZYME 4, MITOCHONDRIAL"/>
    <property type="match status" value="1"/>
</dbReference>
<dbReference type="PANTHER" id="PTHR11947">
    <property type="entry name" value="PYRUVATE DEHYDROGENASE KINASE"/>
    <property type="match status" value="1"/>
</dbReference>
<dbReference type="Pfam" id="PF10436">
    <property type="entry name" value="BCDHK_Adom3"/>
    <property type="match status" value="1"/>
</dbReference>
<dbReference type="Pfam" id="PF02518">
    <property type="entry name" value="HATPase_c"/>
    <property type="match status" value="1"/>
</dbReference>
<dbReference type="SMART" id="SM00387">
    <property type="entry name" value="HATPase_c"/>
    <property type="match status" value="1"/>
</dbReference>
<dbReference type="SUPFAM" id="SSF69012">
    <property type="entry name" value="alpha-ketoacid dehydrogenase kinase, N-terminal domain"/>
    <property type="match status" value="1"/>
</dbReference>
<dbReference type="SUPFAM" id="SSF55874">
    <property type="entry name" value="ATPase domain of HSP90 chaperone/DNA topoisomerase II/histidine kinase"/>
    <property type="match status" value="1"/>
</dbReference>
<dbReference type="PROSITE" id="PS50109">
    <property type="entry name" value="HIS_KIN"/>
    <property type="match status" value="1"/>
</dbReference>
<sequence length="412" mass="46837">MKAARFAMHSARSLSSVGLVPREVELFSRYSPSPLSMKQLLDFGSDNACERTSFSFLRQELPVRLANILKEIDVLPDRLTNTSSVQLVKSWYIQSLMELVEFHEKSPEDQKNLSDFVDTLIKVRNRHHNVVPTMAQGILEYKDTCTVDPVTNQSLQYFLDRFYMNRISTRMLMNQHILIFSDSQTGNPSHIGSIDPKCDVVAVIQDAFESSKMLCDQYYLTSPELKLTQVNGKFPGQPIHIVYVPSHLHHMLFELFKNAMRATVERQESWPSLTPVEVIVVLGKEDLTIKISDRGGGVPLRITDRLFSYMYSTAPTPVMDNSRNAPLAGFGYGLPISRLYAKYFQGDLNLYSLSGYGTDAIIYLKALSSESVEKLPVFNKSAFKHYQMSSEADDWCIPSREPRNLSKEKMAM</sequence>
<keyword id="KW-0067">ATP-binding</keyword>
<keyword id="KW-0909">Hibernation</keyword>
<keyword id="KW-0418">Kinase</keyword>
<keyword id="KW-0496">Mitochondrion</keyword>
<keyword id="KW-0547">Nucleotide-binding</keyword>
<keyword id="KW-1185">Reference proteome</keyword>
<keyword id="KW-0808">Transferase</keyword>
<keyword id="KW-0809">Transit peptide</keyword>
<proteinExistence type="evidence at transcript level"/>
<comment type="function">
    <text>Kinase that plays a key role in regulation of glucose and fatty acid metabolism and homeostasis via phosphorylation of the pyruvate dehydrogenase subunits PDHA1 and PDHA2. This inhibits pyruvate dehydrogenase activity, and thereby regulates metabolite flux through the tricarboxylic acid cycle, down-regulates aerobic respiration and inhibits the formation of acetyl-coenzyme A from pyruvate. Inhibition of pyruvate dehydrogenase decreases glucose utilization and increases fat metabolism in response to prolonged fasting and starvation. Plays an important role in maintaining normal blood glucose levels under starvation, and is involved in the insulin signaling cascade. Via its regulation of pyruvate dehydrogenase activity, plays an important role in maintaining normal blood pH and in preventing the accumulation of ketone bodies under starvation. In the fed state, mediates cellular responses to glucose levels and to a high-fat diet. Regulates both fatty acid oxidation and de novo fatty acid biosynthesis. Plays a role in the generation of reactive oxygen species. Protects detached epithelial cells against anoikis. Plays a role in cell proliferation via its role in regulating carbohydrate and fatty acid metabolism.</text>
</comment>
<comment type="catalytic activity">
    <reaction>
        <text>L-seryl-[pyruvate dehydrogenase E1 alpha subunit] + ATP = O-phospho-L-seryl-[pyruvate dehydrogenase E1 alpha subunit] + ADP + H(+)</text>
        <dbReference type="Rhea" id="RHEA:23052"/>
        <dbReference type="Rhea" id="RHEA-COMP:13689"/>
        <dbReference type="Rhea" id="RHEA-COMP:13690"/>
        <dbReference type="ChEBI" id="CHEBI:15378"/>
        <dbReference type="ChEBI" id="CHEBI:29999"/>
        <dbReference type="ChEBI" id="CHEBI:30616"/>
        <dbReference type="ChEBI" id="CHEBI:83421"/>
        <dbReference type="ChEBI" id="CHEBI:456216"/>
        <dbReference type="EC" id="2.7.11.2"/>
    </reaction>
</comment>
<comment type="subunit">
    <text evidence="1">Homodimer. Interacts with the pyruvate dehydrogenase complex subunit DLAT, and is part of the multimeric pyruvate dehydrogenase complex that contains multiple copies of pyruvate dehydrogenase (E1), dihydrolipoamide acetyltransferase (DLAT, E2) and lipoamide dehydrogenase (DLD, E3) (By similarity).</text>
</comment>
<comment type="subcellular location">
    <subcellularLocation>
        <location>Mitochondrion matrix</location>
    </subcellularLocation>
</comment>
<comment type="tissue specificity">
    <text evidence="4">Detected in skeletal muscle and heart.</text>
</comment>
<comment type="induction">
    <text evidence="4">Up-regulated during hibernation.</text>
</comment>
<comment type="similarity">
    <text evidence="5">Belongs to the PDK/BCKDK protein kinase family.</text>
</comment>